<accession>A8MIU4</accession>
<evidence type="ECO:0000250" key="1"/>
<evidence type="ECO:0000305" key="2"/>
<proteinExistence type="inferred from homology"/>
<gene>
    <name type="primary">pyrD</name>
    <name type="ordered locus">Clos_2191</name>
</gene>
<feature type="chain" id="PRO_0000336442" description="Dihydroorotate dehydrogenase B (NAD(+)), catalytic subunit">
    <location>
        <begin position="1"/>
        <end position="302"/>
    </location>
</feature>
<feature type="active site" description="Nucleophile">
    <location>
        <position position="131"/>
    </location>
</feature>
<feature type="binding site" evidence="1">
    <location>
        <position position="23"/>
    </location>
    <ligand>
        <name>FMN</name>
        <dbReference type="ChEBI" id="CHEBI:58210"/>
    </ligand>
</feature>
<feature type="binding site" evidence="1">
    <location>
        <begin position="47"/>
        <end position="48"/>
    </location>
    <ligand>
        <name>FMN</name>
        <dbReference type="ChEBI" id="CHEBI:58210"/>
    </ligand>
</feature>
<feature type="binding site" evidence="1">
    <location>
        <position position="47"/>
    </location>
    <ligand>
        <name>substrate</name>
    </ligand>
</feature>
<feature type="binding site" evidence="1">
    <location>
        <begin position="71"/>
        <end position="75"/>
    </location>
    <ligand>
        <name>substrate</name>
    </ligand>
</feature>
<feature type="binding site" evidence="1">
    <location>
        <position position="101"/>
    </location>
    <ligand>
        <name>FMN</name>
        <dbReference type="ChEBI" id="CHEBI:58210"/>
    </ligand>
</feature>
<feature type="binding site" evidence="1">
    <location>
        <position position="128"/>
    </location>
    <ligand>
        <name>FMN</name>
        <dbReference type="ChEBI" id="CHEBI:58210"/>
    </ligand>
</feature>
<feature type="binding site" evidence="1">
    <location>
        <position position="128"/>
    </location>
    <ligand>
        <name>substrate</name>
    </ligand>
</feature>
<feature type="binding site" evidence="1">
    <location>
        <position position="166"/>
    </location>
    <ligand>
        <name>FMN</name>
        <dbReference type="ChEBI" id="CHEBI:58210"/>
    </ligand>
</feature>
<feature type="binding site" evidence="1">
    <location>
        <position position="192"/>
    </location>
    <ligand>
        <name>FMN</name>
        <dbReference type="ChEBI" id="CHEBI:58210"/>
    </ligand>
</feature>
<feature type="binding site" evidence="1">
    <location>
        <begin position="193"/>
        <end position="194"/>
    </location>
    <ligand>
        <name>substrate</name>
    </ligand>
</feature>
<feature type="binding site" evidence="1">
    <location>
        <position position="218"/>
    </location>
    <ligand>
        <name>FMN</name>
        <dbReference type="ChEBI" id="CHEBI:58210"/>
    </ligand>
</feature>
<feature type="binding site" evidence="1">
    <location>
        <begin position="244"/>
        <end position="245"/>
    </location>
    <ligand>
        <name>FMN</name>
        <dbReference type="ChEBI" id="CHEBI:58210"/>
    </ligand>
</feature>
<feature type="binding site" evidence="1">
    <location>
        <begin position="266"/>
        <end position="267"/>
    </location>
    <ligand>
        <name>FMN</name>
        <dbReference type="ChEBI" id="CHEBI:58210"/>
    </ligand>
</feature>
<sequence>MTRRNMGVHIAGIQLKNPVMTASGTFGSGREYSEFVDLNQLGAVVVKGVANEPWSGNPTPRIAETYGGMLNSVGLQNPGVEAFIKDDIQFLRQYDTKIIVNIAGRTVADYCKVTEKLGDADIDLIELNISCPNVKAGGVNFGTNPAMVEEVTKAVKKVARQPLIVKLTPNVTDIVEIAKAAVAGGADAISLINTLLGMAIDIHGRKPILANVVGGLSGPAIKPVALRMVYQVANAVQVPIIGMGGIATGEDAIAFMLAGATGVAVGTANFMNPRATMEVLEGIEDYMDQYNIEDIHEIIGKL</sequence>
<organism>
    <name type="scientific">Alkaliphilus oremlandii (strain OhILAs)</name>
    <name type="common">Clostridium oremlandii (strain OhILAs)</name>
    <dbReference type="NCBI Taxonomy" id="350688"/>
    <lineage>
        <taxon>Bacteria</taxon>
        <taxon>Bacillati</taxon>
        <taxon>Bacillota</taxon>
        <taxon>Clostridia</taxon>
        <taxon>Peptostreptococcales</taxon>
        <taxon>Natronincolaceae</taxon>
        <taxon>Alkaliphilus</taxon>
    </lineage>
</organism>
<dbReference type="EC" id="1.3.1.14"/>
<dbReference type="EMBL" id="CP000853">
    <property type="protein sequence ID" value="ABW19726.1"/>
    <property type="molecule type" value="Genomic_DNA"/>
</dbReference>
<dbReference type="RefSeq" id="WP_012160035.1">
    <property type="nucleotide sequence ID" value="NC_009922.1"/>
</dbReference>
<dbReference type="SMR" id="A8MIU4"/>
<dbReference type="STRING" id="350688.Clos_2191"/>
<dbReference type="KEGG" id="aoe:Clos_2191"/>
<dbReference type="eggNOG" id="COG0167">
    <property type="taxonomic scope" value="Bacteria"/>
</dbReference>
<dbReference type="HOGENOM" id="CLU_042042_0_0_9"/>
<dbReference type="OrthoDB" id="9794954at2"/>
<dbReference type="UniPathway" id="UPA00070">
    <property type="reaction ID" value="UER00945"/>
</dbReference>
<dbReference type="Proteomes" id="UP000000269">
    <property type="component" value="Chromosome"/>
</dbReference>
<dbReference type="GO" id="GO:0005737">
    <property type="term" value="C:cytoplasm"/>
    <property type="evidence" value="ECO:0007669"/>
    <property type="project" value="UniProtKB-SubCell"/>
</dbReference>
<dbReference type="GO" id="GO:0004589">
    <property type="term" value="F:dihydroorotate dehydrogenase (NAD+) activity"/>
    <property type="evidence" value="ECO:0007669"/>
    <property type="project" value="UniProtKB-EC"/>
</dbReference>
<dbReference type="GO" id="GO:0006207">
    <property type="term" value="P:'de novo' pyrimidine nucleobase biosynthetic process"/>
    <property type="evidence" value="ECO:0007669"/>
    <property type="project" value="InterPro"/>
</dbReference>
<dbReference type="GO" id="GO:0044205">
    <property type="term" value="P:'de novo' UMP biosynthetic process"/>
    <property type="evidence" value="ECO:0007669"/>
    <property type="project" value="UniProtKB-UniRule"/>
</dbReference>
<dbReference type="CDD" id="cd04740">
    <property type="entry name" value="DHOD_1B_like"/>
    <property type="match status" value="1"/>
</dbReference>
<dbReference type="FunFam" id="3.20.20.70:FF:000027">
    <property type="entry name" value="Dihydropyrimidine dehydrogenase [NADP(+)]"/>
    <property type="match status" value="1"/>
</dbReference>
<dbReference type="Gene3D" id="3.20.20.70">
    <property type="entry name" value="Aldolase class I"/>
    <property type="match status" value="1"/>
</dbReference>
<dbReference type="HAMAP" id="MF_00224">
    <property type="entry name" value="DHO_dh_type1"/>
    <property type="match status" value="1"/>
</dbReference>
<dbReference type="InterPro" id="IPR013785">
    <property type="entry name" value="Aldolase_TIM"/>
</dbReference>
<dbReference type="InterPro" id="IPR050074">
    <property type="entry name" value="DHO_dehydrogenase"/>
</dbReference>
<dbReference type="InterPro" id="IPR033888">
    <property type="entry name" value="DHOD_1B"/>
</dbReference>
<dbReference type="InterPro" id="IPR024920">
    <property type="entry name" value="Dihydroorotate_DH_1"/>
</dbReference>
<dbReference type="InterPro" id="IPR012135">
    <property type="entry name" value="Dihydroorotate_DH_1_2"/>
</dbReference>
<dbReference type="InterPro" id="IPR005720">
    <property type="entry name" value="Dihydroorotate_DH_cat"/>
</dbReference>
<dbReference type="InterPro" id="IPR001295">
    <property type="entry name" value="Dihydroorotate_DH_CS"/>
</dbReference>
<dbReference type="InterPro" id="IPR049622">
    <property type="entry name" value="Dihydroorotate_DH_I"/>
</dbReference>
<dbReference type="NCBIfam" id="NF005574">
    <property type="entry name" value="PRK07259.1"/>
    <property type="match status" value="1"/>
</dbReference>
<dbReference type="NCBIfam" id="TIGR01037">
    <property type="entry name" value="pyrD_sub1_fam"/>
    <property type="match status" value="1"/>
</dbReference>
<dbReference type="PANTHER" id="PTHR48109:SF1">
    <property type="entry name" value="DIHYDROOROTATE DEHYDROGENASE (FUMARATE)"/>
    <property type="match status" value="1"/>
</dbReference>
<dbReference type="PANTHER" id="PTHR48109">
    <property type="entry name" value="DIHYDROOROTATE DEHYDROGENASE (QUINONE), MITOCHONDRIAL-RELATED"/>
    <property type="match status" value="1"/>
</dbReference>
<dbReference type="Pfam" id="PF01180">
    <property type="entry name" value="DHO_dh"/>
    <property type="match status" value="1"/>
</dbReference>
<dbReference type="PIRSF" id="PIRSF000164">
    <property type="entry name" value="DHO_oxidase"/>
    <property type="match status" value="1"/>
</dbReference>
<dbReference type="SUPFAM" id="SSF51395">
    <property type="entry name" value="FMN-linked oxidoreductases"/>
    <property type="match status" value="1"/>
</dbReference>
<dbReference type="PROSITE" id="PS00912">
    <property type="entry name" value="DHODEHASE_2"/>
    <property type="match status" value="1"/>
</dbReference>
<name>PYRDB_ALKOO</name>
<reference key="1">
    <citation type="submission" date="2007-10" db="EMBL/GenBank/DDBJ databases">
        <title>Complete genome of Alkaliphilus oremlandii OhILAs.</title>
        <authorList>
            <person name="Copeland A."/>
            <person name="Lucas S."/>
            <person name="Lapidus A."/>
            <person name="Barry K."/>
            <person name="Detter J.C."/>
            <person name="Glavina del Rio T."/>
            <person name="Hammon N."/>
            <person name="Israni S."/>
            <person name="Dalin E."/>
            <person name="Tice H."/>
            <person name="Pitluck S."/>
            <person name="Chain P."/>
            <person name="Malfatti S."/>
            <person name="Shin M."/>
            <person name="Vergez L."/>
            <person name="Schmutz J."/>
            <person name="Larimer F."/>
            <person name="Land M."/>
            <person name="Hauser L."/>
            <person name="Kyrpides N."/>
            <person name="Mikhailova N."/>
            <person name="Stolz J.F."/>
            <person name="Dawson A."/>
            <person name="Fisher E."/>
            <person name="Crable B."/>
            <person name="Perera E."/>
            <person name="Lisak J."/>
            <person name="Ranganathan M."/>
            <person name="Basu P."/>
            <person name="Richardson P."/>
        </authorList>
    </citation>
    <scope>NUCLEOTIDE SEQUENCE [LARGE SCALE GENOMIC DNA]</scope>
    <source>
        <strain>OhILAs</strain>
    </source>
</reference>
<protein>
    <recommendedName>
        <fullName>Dihydroorotate dehydrogenase B (NAD(+)), catalytic subunit</fullName>
        <shortName>DHOD B</shortName>
        <shortName>DHODase B</shortName>
        <shortName>DHOdehase B</shortName>
        <ecNumber>1.3.1.14</ecNumber>
    </recommendedName>
    <alternativeName>
        <fullName>Dihydroorotate oxidase B</fullName>
    </alternativeName>
    <alternativeName>
        <fullName>Orotate reductase (NADH)</fullName>
    </alternativeName>
</protein>
<keyword id="KW-0963">Cytoplasm</keyword>
<keyword id="KW-0285">Flavoprotein</keyword>
<keyword id="KW-0288">FMN</keyword>
<keyword id="KW-0520">NAD</keyword>
<keyword id="KW-0560">Oxidoreductase</keyword>
<keyword id="KW-0665">Pyrimidine biosynthesis</keyword>
<keyword id="KW-1185">Reference proteome</keyword>
<comment type="function">
    <text evidence="1">Catalyzes the conversion of dihydroorotate to orotate with NAD(+) as electron acceptor.</text>
</comment>
<comment type="catalytic activity">
    <reaction>
        <text>(S)-dihydroorotate + NAD(+) = orotate + NADH + H(+)</text>
        <dbReference type="Rhea" id="RHEA:13513"/>
        <dbReference type="ChEBI" id="CHEBI:15378"/>
        <dbReference type="ChEBI" id="CHEBI:30839"/>
        <dbReference type="ChEBI" id="CHEBI:30864"/>
        <dbReference type="ChEBI" id="CHEBI:57540"/>
        <dbReference type="ChEBI" id="CHEBI:57945"/>
        <dbReference type="EC" id="1.3.1.14"/>
    </reaction>
</comment>
<comment type="cofactor">
    <cofactor evidence="1">
        <name>FMN</name>
        <dbReference type="ChEBI" id="CHEBI:58210"/>
    </cofactor>
    <text evidence="1">Binds 1 FMN per subunit.</text>
</comment>
<comment type="pathway">
    <text>Pyrimidine metabolism; UMP biosynthesis via de novo pathway; orotate from (S)-dihydroorotate (NAD(+) route): step 1/1.</text>
</comment>
<comment type="subunit">
    <text evidence="1">Heterotetramer of 2 PyrK and 2 PyrD type B subunits.</text>
</comment>
<comment type="subcellular location">
    <subcellularLocation>
        <location evidence="1">Cytoplasm</location>
    </subcellularLocation>
</comment>
<comment type="similarity">
    <text evidence="2">Belongs to the dihydroorotate dehydrogenase family. Type 1 subfamily.</text>
</comment>